<proteinExistence type="inferred from homology"/>
<dbReference type="EMBL" id="BX571965">
    <property type="protein sequence ID" value="CAH36495.1"/>
    <property type="molecule type" value="Genomic_DNA"/>
</dbReference>
<dbReference type="RefSeq" id="WP_004189360.1">
    <property type="nucleotide sequence ID" value="NZ_CP009538.1"/>
</dbReference>
<dbReference type="RefSeq" id="YP_109084.1">
    <property type="nucleotide sequence ID" value="NC_006350.1"/>
</dbReference>
<dbReference type="SMR" id="Q63S33"/>
<dbReference type="STRING" id="272560.BPSL2489"/>
<dbReference type="GeneID" id="93061076"/>
<dbReference type="KEGG" id="bps:BPSL2489"/>
<dbReference type="PATRIC" id="fig|272560.51.peg.2893"/>
<dbReference type="eggNOG" id="COG0335">
    <property type="taxonomic scope" value="Bacteria"/>
</dbReference>
<dbReference type="Proteomes" id="UP000000605">
    <property type="component" value="Chromosome 1"/>
</dbReference>
<dbReference type="GO" id="GO:0022625">
    <property type="term" value="C:cytosolic large ribosomal subunit"/>
    <property type="evidence" value="ECO:0007669"/>
    <property type="project" value="TreeGrafter"/>
</dbReference>
<dbReference type="GO" id="GO:0003735">
    <property type="term" value="F:structural constituent of ribosome"/>
    <property type="evidence" value="ECO:0007669"/>
    <property type="project" value="InterPro"/>
</dbReference>
<dbReference type="GO" id="GO:0006412">
    <property type="term" value="P:translation"/>
    <property type="evidence" value="ECO:0007669"/>
    <property type="project" value="UniProtKB-UniRule"/>
</dbReference>
<dbReference type="FunFam" id="2.30.30.790:FF:000001">
    <property type="entry name" value="50S ribosomal protein L19"/>
    <property type="match status" value="1"/>
</dbReference>
<dbReference type="Gene3D" id="2.30.30.790">
    <property type="match status" value="1"/>
</dbReference>
<dbReference type="HAMAP" id="MF_00402">
    <property type="entry name" value="Ribosomal_bL19"/>
    <property type="match status" value="1"/>
</dbReference>
<dbReference type="InterPro" id="IPR001857">
    <property type="entry name" value="Ribosomal_bL19"/>
</dbReference>
<dbReference type="InterPro" id="IPR018257">
    <property type="entry name" value="Ribosomal_bL19_CS"/>
</dbReference>
<dbReference type="InterPro" id="IPR038657">
    <property type="entry name" value="Ribosomal_bL19_sf"/>
</dbReference>
<dbReference type="InterPro" id="IPR008991">
    <property type="entry name" value="Translation_prot_SH3-like_sf"/>
</dbReference>
<dbReference type="NCBIfam" id="TIGR01024">
    <property type="entry name" value="rplS_bact"/>
    <property type="match status" value="1"/>
</dbReference>
<dbReference type="PANTHER" id="PTHR15680:SF9">
    <property type="entry name" value="LARGE RIBOSOMAL SUBUNIT PROTEIN BL19M"/>
    <property type="match status" value="1"/>
</dbReference>
<dbReference type="PANTHER" id="PTHR15680">
    <property type="entry name" value="RIBOSOMAL PROTEIN L19"/>
    <property type="match status" value="1"/>
</dbReference>
<dbReference type="Pfam" id="PF01245">
    <property type="entry name" value="Ribosomal_L19"/>
    <property type="match status" value="1"/>
</dbReference>
<dbReference type="PIRSF" id="PIRSF002191">
    <property type="entry name" value="Ribosomal_L19"/>
    <property type="match status" value="1"/>
</dbReference>
<dbReference type="PRINTS" id="PR00061">
    <property type="entry name" value="RIBOSOMALL19"/>
</dbReference>
<dbReference type="SUPFAM" id="SSF50104">
    <property type="entry name" value="Translation proteins SH3-like domain"/>
    <property type="match status" value="1"/>
</dbReference>
<dbReference type="PROSITE" id="PS01015">
    <property type="entry name" value="RIBOSOMAL_L19"/>
    <property type="match status" value="1"/>
</dbReference>
<keyword id="KW-1185">Reference proteome</keyword>
<keyword id="KW-0687">Ribonucleoprotein</keyword>
<keyword id="KW-0689">Ribosomal protein</keyword>
<feature type="chain" id="PRO_0000163430" description="Large ribosomal subunit protein bL19">
    <location>
        <begin position="1"/>
        <end position="129"/>
    </location>
</feature>
<gene>
    <name evidence="1" type="primary">rplS</name>
    <name type="ordered locus">BPSL2489</name>
</gene>
<reference key="1">
    <citation type="journal article" date="2004" name="Proc. Natl. Acad. Sci. U.S.A.">
        <title>Genomic plasticity of the causative agent of melioidosis, Burkholderia pseudomallei.</title>
        <authorList>
            <person name="Holden M.T.G."/>
            <person name="Titball R.W."/>
            <person name="Peacock S.J."/>
            <person name="Cerdeno-Tarraga A.-M."/>
            <person name="Atkins T."/>
            <person name="Crossman L.C."/>
            <person name="Pitt T."/>
            <person name="Churcher C."/>
            <person name="Mungall K.L."/>
            <person name="Bentley S.D."/>
            <person name="Sebaihia M."/>
            <person name="Thomson N.R."/>
            <person name="Bason N."/>
            <person name="Beacham I.R."/>
            <person name="Brooks K."/>
            <person name="Brown K.A."/>
            <person name="Brown N.F."/>
            <person name="Challis G.L."/>
            <person name="Cherevach I."/>
            <person name="Chillingworth T."/>
            <person name="Cronin A."/>
            <person name="Crossett B."/>
            <person name="Davis P."/>
            <person name="DeShazer D."/>
            <person name="Feltwell T."/>
            <person name="Fraser A."/>
            <person name="Hance Z."/>
            <person name="Hauser H."/>
            <person name="Holroyd S."/>
            <person name="Jagels K."/>
            <person name="Keith K.E."/>
            <person name="Maddison M."/>
            <person name="Moule S."/>
            <person name="Price C."/>
            <person name="Quail M.A."/>
            <person name="Rabbinowitsch E."/>
            <person name="Rutherford K."/>
            <person name="Sanders M."/>
            <person name="Simmonds M."/>
            <person name="Songsivilai S."/>
            <person name="Stevens K."/>
            <person name="Tumapa S."/>
            <person name="Vesaratchavest M."/>
            <person name="Whitehead S."/>
            <person name="Yeats C."/>
            <person name="Barrell B.G."/>
            <person name="Oyston P.C.F."/>
            <person name="Parkhill J."/>
        </authorList>
    </citation>
    <scope>NUCLEOTIDE SEQUENCE [LARGE SCALE GENOMIC DNA]</scope>
    <source>
        <strain>K96243</strain>
    </source>
</reference>
<name>RL19_BURPS</name>
<evidence type="ECO:0000255" key="1">
    <source>
        <dbReference type="HAMAP-Rule" id="MF_00402"/>
    </source>
</evidence>
<evidence type="ECO:0000305" key="2"/>
<comment type="function">
    <text evidence="1">This protein is located at the 30S-50S ribosomal subunit interface and may play a role in the structure and function of the aminoacyl-tRNA binding site.</text>
</comment>
<comment type="similarity">
    <text evidence="1">Belongs to the bacterial ribosomal protein bL19 family.</text>
</comment>
<protein>
    <recommendedName>
        <fullName evidence="1">Large ribosomal subunit protein bL19</fullName>
    </recommendedName>
    <alternativeName>
        <fullName evidence="2">50S ribosomal protein L19</fullName>
    </alternativeName>
</protein>
<accession>Q63S33</accession>
<sequence>MNLIAKLEQEEIERALAGKTIPEFAPGDTVIVNVNVVEGNRKRVQAYEGVVIAKRNRGLNSSFIVRKISSGEGVERTFQTYSPLLASIVVKRRGDVRRAKLYYLRERSGKSARIKEKLVSKDRAAAAQQ</sequence>
<organism>
    <name type="scientific">Burkholderia pseudomallei (strain K96243)</name>
    <dbReference type="NCBI Taxonomy" id="272560"/>
    <lineage>
        <taxon>Bacteria</taxon>
        <taxon>Pseudomonadati</taxon>
        <taxon>Pseudomonadota</taxon>
        <taxon>Betaproteobacteria</taxon>
        <taxon>Burkholderiales</taxon>
        <taxon>Burkholderiaceae</taxon>
        <taxon>Burkholderia</taxon>
        <taxon>pseudomallei group</taxon>
    </lineage>
</organism>